<evidence type="ECO:0000255" key="1">
    <source>
        <dbReference type="HAMAP-Rule" id="MF_00815"/>
    </source>
</evidence>
<sequence length="286" mass="31606">MASLRDIKAKINSTKKTSQITKAMEMVSASKLNRAEQNAKSFVPYMEKIQEVVASIAQGSKGINHPMLNARPVKRTGYIVITSDRGLAGGYNSNVLRTVSNVIRERHNMDSNQYSIIVLGRLGRDYLKRRGFNIIDEVVGLSDHPSFTDIKDLASRAIAMFADGAYDELYIYYNHYVSKISQEVTENKILPLTDVASDKPTTAYEFEPSEEEILKVLLPQYAESLVYGALLDGKASEHAARMTAMKSATDNAMEVIDSLTLSFNRARQAAITQEITEIVGGAAALE</sequence>
<reference key="1">
    <citation type="journal article" date="2003" name="Nature">
        <title>The genome sequence of Bacillus anthracis Ames and comparison to closely related bacteria.</title>
        <authorList>
            <person name="Read T.D."/>
            <person name="Peterson S.N."/>
            <person name="Tourasse N.J."/>
            <person name="Baillie L.W."/>
            <person name="Paulsen I.T."/>
            <person name="Nelson K.E."/>
            <person name="Tettelin H."/>
            <person name="Fouts D.E."/>
            <person name="Eisen J.A."/>
            <person name="Gill S.R."/>
            <person name="Holtzapple E.K."/>
            <person name="Okstad O.A."/>
            <person name="Helgason E."/>
            <person name="Rilstone J."/>
            <person name="Wu M."/>
            <person name="Kolonay J.F."/>
            <person name="Beanan M.J."/>
            <person name="Dodson R.J."/>
            <person name="Brinkac L.M."/>
            <person name="Gwinn M.L."/>
            <person name="DeBoy R.T."/>
            <person name="Madpu R."/>
            <person name="Daugherty S.C."/>
            <person name="Durkin A.S."/>
            <person name="Haft D.H."/>
            <person name="Nelson W.C."/>
            <person name="Peterson J.D."/>
            <person name="Pop M."/>
            <person name="Khouri H.M."/>
            <person name="Radune D."/>
            <person name="Benton J.L."/>
            <person name="Mahamoud Y."/>
            <person name="Jiang L."/>
            <person name="Hance I.R."/>
            <person name="Weidman J.F."/>
            <person name="Berry K.J."/>
            <person name="Plaut R.D."/>
            <person name="Wolf A.M."/>
            <person name="Watkins K.L."/>
            <person name="Nierman W.C."/>
            <person name="Hazen A."/>
            <person name="Cline R.T."/>
            <person name="Redmond C."/>
            <person name="Thwaite J.E."/>
            <person name="White O."/>
            <person name="Salzberg S.L."/>
            <person name="Thomason B."/>
            <person name="Friedlander A.M."/>
            <person name="Koehler T.M."/>
            <person name="Hanna P.C."/>
            <person name="Kolstoe A.-B."/>
            <person name="Fraser C.M."/>
        </authorList>
    </citation>
    <scope>NUCLEOTIDE SEQUENCE [LARGE SCALE GENOMIC DNA]</scope>
    <source>
        <strain>Ames / isolate Porton</strain>
    </source>
</reference>
<reference key="2">
    <citation type="journal article" date="2009" name="J. Bacteriol.">
        <title>The complete genome sequence of Bacillus anthracis Ames 'Ancestor'.</title>
        <authorList>
            <person name="Ravel J."/>
            <person name="Jiang L."/>
            <person name="Stanley S.T."/>
            <person name="Wilson M.R."/>
            <person name="Decker R.S."/>
            <person name="Read T.D."/>
            <person name="Worsham P."/>
            <person name="Keim P.S."/>
            <person name="Salzberg S.L."/>
            <person name="Fraser-Liggett C.M."/>
            <person name="Rasko D.A."/>
        </authorList>
    </citation>
    <scope>NUCLEOTIDE SEQUENCE [LARGE SCALE GENOMIC DNA]</scope>
    <source>
        <strain>Ames ancestor</strain>
    </source>
</reference>
<reference key="3">
    <citation type="submission" date="2004-01" db="EMBL/GenBank/DDBJ databases">
        <title>Complete genome sequence of Bacillus anthracis Sterne.</title>
        <authorList>
            <person name="Brettin T.S."/>
            <person name="Bruce D."/>
            <person name="Challacombe J.F."/>
            <person name="Gilna P."/>
            <person name="Han C."/>
            <person name="Hill K."/>
            <person name="Hitchcock P."/>
            <person name="Jackson P."/>
            <person name="Keim P."/>
            <person name="Longmire J."/>
            <person name="Lucas S."/>
            <person name="Okinaka R."/>
            <person name="Richardson P."/>
            <person name="Rubin E."/>
            <person name="Tice H."/>
        </authorList>
    </citation>
    <scope>NUCLEOTIDE SEQUENCE [LARGE SCALE GENOMIC DNA]</scope>
    <source>
        <strain>Sterne</strain>
    </source>
</reference>
<gene>
    <name evidence="1" type="primary">atpG</name>
    <name type="ordered locus">BA_5548</name>
    <name type="ordered locus">GBAA_5548</name>
    <name type="ordered locus">BAS5156</name>
</gene>
<comment type="function">
    <text evidence="1">Produces ATP from ADP in the presence of a proton gradient across the membrane. The gamma chain is believed to be important in regulating ATPase activity and the flow of protons through the CF(0) complex.</text>
</comment>
<comment type="subunit">
    <text evidence="1">F-type ATPases have 2 components, CF(1) - the catalytic core - and CF(0) - the membrane proton channel. CF(1) has five subunits: alpha(3), beta(3), gamma(1), delta(1), epsilon(1). CF(0) has three main subunits: a, b and c.</text>
</comment>
<comment type="subcellular location">
    <subcellularLocation>
        <location evidence="1">Cell membrane</location>
        <topology evidence="1">Peripheral membrane protein</topology>
    </subcellularLocation>
</comment>
<comment type="similarity">
    <text evidence="1">Belongs to the ATPase gamma chain family.</text>
</comment>
<feature type="chain" id="PRO_0000073223" description="ATP synthase gamma chain">
    <location>
        <begin position="1"/>
        <end position="286"/>
    </location>
</feature>
<organism>
    <name type="scientific">Bacillus anthracis</name>
    <dbReference type="NCBI Taxonomy" id="1392"/>
    <lineage>
        <taxon>Bacteria</taxon>
        <taxon>Bacillati</taxon>
        <taxon>Bacillota</taxon>
        <taxon>Bacilli</taxon>
        <taxon>Bacillales</taxon>
        <taxon>Bacillaceae</taxon>
        <taxon>Bacillus</taxon>
        <taxon>Bacillus cereus group</taxon>
    </lineage>
</organism>
<proteinExistence type="inferred from homology"/>
<accession>Q81JZ4</accession>
<accession>Q6HQJ3</accession>
<accession>Q6KJW8</accession>
<name>ATPG_BACAN</name>
<protein>
    <recommendedName>
        <fullName evidence="1">ATP synthase gamma chain</fullName>
    </recommendedName>
    <alternativeName>
        <fullName evidence="1">ATP synthase F1 sector gamma subunit</fullName>
    </alternativeName>
    <alternativeName>
        <fullName evidence="1">F-ATPase gamma subunit</fullName>
    </alternativeName>
</protein>
<dbReference type="EMBL" id="AE016879">
    <property type="protein sequence ID" value="AAP29192.1"/>
    <property type="molecule type" value="Genomic_DNA"/>
</dbReference>
<dbReference type="EMBL" id="AE017334">
    <property type="protein sequence ID" value="AAT34692.2"/>
    <property type="molecule type" value="Genomic_DNA"/>
</dbReference>
<dbReference type="EMBL" id="AE017225">
    <property type="protein sequence ID" value="AAT57445.1"/>
    <property type="molecule type" value="Genomic_DNA"/>
</dbReference>
<dbReference type="RefSeq" id="NP_847706.1">
    <property type="nucleotide sequence ID" value="NC_003997.3"/>
</dbReference>
<dbReference type="RefSeq" id="WP_000157696.1">
    <property type="nucleotide sequence ID" value="NZ_WXXJ01000038.1"/>
</dbReference>
<dbReference type="RefSeq" id="YP_031395.1">
    <property type="nucleotide sequence ID" value="NC_005945.1"/>
</dbReference>
<dbReference type="SMR" id="Q81JZ4"/>
<dbReference type="STRING" id="261594.GBAA_5548"/>
<dbReference type="DNASU" id="1085232"/>
<dbReference type="GeneID" id="93005817"/>
<dbReference type="KEGG" id="ban:BA_5548"/>
<dbReference type="KEGG" id="bar:GBAA_5548"/>
<dbReference type="KEGG" id="bat:BAS5156"/>
<dbReference type="PATRIC" id="fig|198094.11.peg.5508"/>
<dbReference type="eggNOG" id="COG0224">
    <property type="taxonomic scope" value="Bacteria"/>
</dbReference>
<dbReference type="HOGENOM" id="CLU_050669_0_1_9"/>
<dbReference type="OMA" id="MQITSAM"/>
<dbReference type="OrthoDB" id="9812769at2"/>
<dbReference type="Proteomes" id="UP000000427">
    <property type="component" value="Chromosome"/>
</dbReference>
<dbReference type="Proteomes" id="UP000000594">
    <property type="component" value="Chromosome"/>
</dbReference>
<dbReference type="GO" id="GO:0005886">
    <property type="term" value="C:plasma membrane"/>
    <property type="evidence" value="ECO:0007669"/>
    <property type="project" value="UniProtKB-SubCell"/>
</dbReference>
<dbReference type="GO" id="GO:0045259">
    <property type="term" value="C:proton-transporting ATP synthase complex"/>
    <property type="evidence" value="ECO:0007669"/>
    <property type="project" value="UniProtKB-KW"/>
</dbReference>
<dbReference type="GO" id="GO:0005524">
    <property type="term" value="F:ATP binding"/>
    <property type="evidence" value="ECO:0007669"/>
    <property type="project" value="UniProtKB-UniRule"/>
</dbReference>
<dbReference type="GO" id="GO:0046933">
    <property type="term" value="F:proton-transporting ATP synthase activity, rotational mechanism"/>
    <property type="evidence" value="ECO:0007669"/>
    <property type="project" value="UniProtKB-UniRule"/>
</dbReference>
<dbReference type="GO" id="GO:0042777">
    <property type="term" value="P:proton motive force-driven plasma membrane ATP synthesis"/>
    <property type="evidence" value="ECO:0007669"/>
    <property type="project" value="UniProtKB-UniRule"/>
</dbReference>
<dbReference type="CDD" id="cd12151">
    <property type="entry name" value="F1-ATPase_gamma"/>
    <property type="match status" value="1"/>
</dbReference>
<dbReference type="FunFam" id="3.40.1380.10:FF:000002">
    <property type="entry name" value="ATP synthase gamma chain"/>
    <property type="match status" value="1"/>
</dbReference>
<dbReference type="Gene3D" id="3.40.1380.10">
    <property type="match status" value="1"/>
</dbReference>
<dbReference type="Gene3D" id="1.10.287.80">
    <property type="entry name" value="ATP synthase, gamma subunit, helix hairpin domain"/>
    <property type="match status" value="1"/>
</dbReference>
<dbReference type="HAMAP" id="MF_00815">
    <property type="entry name" value="ATP_synth_gamma_bact"/>
    <property type="match status" value="1"/>
</dbReference>
<dbReference type="InterPro" id="IPR035968">
    <property type="entry name" value="ATP_synth_F1_ATPase_gsu"/>
</dbReference>
<dbReference type="InterPro" id="IPR000131">
    <property type="entry name" value="ATP_synth_F1_gsu"/>
</dbReference>
<dbReference type="InterPro" id="IPR023632">
    <property type="entry name" value="ATP_synth_F1_gsu_CS"/>
</dbReference>
<dbReference type="NCBIfam" id="TIGR01146">
    <property type="entry name" value="ATPsyn_F1gamma"/>
    <property type="match status" value="1"/>
</dbReference>
<dbReference type="PANTHER" id="PTHR11693">
    <property type="entry name" value="ATP SYNTHASE GAMMA CHAIN"/>
    <property type="match status" value="1"/>
</dbReference>
<dbReference type="PANTHER" id="PTHR11693:SF22">
    <property type="entry name" value="ATP SYNTHASE SUBUNIT GAMMA, MITOCHONDRIAL"/>
    <property type="match status" value="1"/>
</dbReference>
<dbReference type="Pfam" id="PF00231">
    <property type="entry name" value="ATP-synt"/>
    <property type="match status" value="1"/>
</dbReference>
<dbReference type="PRINTS" id="PR00126">
    <property type="entry name" value="ATPASEGAMMA"/>
</dbReference>
<dbReference type="SUPFAM" id="SSF52943">
    <property type="entry name" value="ATP synthase (F1-ATPase), gamma subunit"/>
    <property type="match status" value="1"/>
</dbReference>
<dbReference type="PROSITE" id="PS00153">
    <property type="entry name" value="ATPASE_GAMMA"/>
    <property type="match status" value="1"/>
</dbReference>
<keyword id="KW-0066">ATP synthesis</keyword>
<keyword id="KW-1003">Cell membrane</keyword>
<keyword id="KW-0139">CF(1)</keyword>
<keyword id="KW-0375">Hydrogen ion transport</keyword>
<keyword id="KW-0406">Ion transport</keyword>
<keyword id="KW-0472">Membrane</keyword>
<keyword id="KW-1185">Reference proteome</keyword>
<keyword id="KW-0813">Transport</keyword>